<gene>
    <name evidence="1" type="primary">frr</name>
    <name type="ordered locus">SAV_2624</name>
</gene>
<keyword id="KW-0963">Cytoplasm</keyword>
<keyword id="KW-0648">Protein biosynthesis</keyword>
<keyword id="KW-1185">Reference proteome</keyword>
<sequence length="185" mass="20741">MIEETLLEAEEKMEKAVVVAKEDFAAIRTGRAHPAMFNKIVADYYGALTPINQLASFSVPEPRMAVVTPFDKSALRNIEQAIRDSDLGVNPSNDGNIIRVVFPELTEERRKDYIKVAKTKGEDAKVSIRSVRRKAKDAIDKLIKDGEVGEDEGRRAEKELDDTTAKYVAQVDELLKHKEAELLEV</sequence>
<protein>
    <recommendedName>
        <fullName evidence="1">Ribosome-recycling factor</fullName>
        <shortName evidence="1">RRF</shortName>
    </recommendedName>
    <alternativeName>
        <fullName evidence="1">Ribosome-releasing factor</fullName>
    </alternativeName>
</protein>
<feature type="chain" id="PRO_0000167549" description="Ribosome-recycling factor">
    <location>
        <begin position="1"/>
        <end position="185"/>
    </location>
</feature>
<reference key="1">
    <citation type="journal article" date="2001" name="Proc. Natl. Acad. Sci. U.S.A.">
        <title>Genome sequence of an industrial microorganism Streptomyces avermitilis: deducing the ability of producing secondary metabolites.</title>
        <authorList>
            <person name="Omura S."/>
            <person name="Ikeda H."/>
            <person name="Ishikawa J."/>
            <person name="Hanamoto A."/>
            <person name="Takahashi C."/>
            <person name="Shinose M."/>
            <person name="Takahashi Y."/>
            <person name="Horikawa H."/>
            <person name="Nakazawa H."/>
            <person name="Osonoe T."/>
            <person name="Kikuchi H."/>
            <person name="Shiba T."/>
            <person name="Sakaki Y."/>
            <person name="Hattori M."/>
        </authorList>
    </citation>
    <scope>NUCLEOTIDE SEQUENCE [LARGE SCALE GENOMIC DNA]</scope>
    <source>
        <strain>ATCC 31267 / DSM 46492 / JCM 5070 / NBRC 14893 / NCIMB 12804 / NRRL 8165 / MA-4680</strain>
    </source>
</reference>
<reference key="2">
    <citation type="journal article" date="2003" name="Nat. Biotechnol.">
        <title>Complete genome sequence and comparative analysis of the industrial microorganism Streptomyces avermitilis.</title>
        <authorList>
            <person name="Ikeda H."/>
            <person name="Ishikawa J."/>
            <person name="Hanamoto A."/>
            <person name="Shinose M."/>
            <person name="Kikuchi H."/>
            <person name="Shiba T."/>
            <person name="Sakaki Y."/>
            <person name="Hattori M."/>
            <person name="Omura S."/>
        </authorList>
    </citation>
    <scope>NUCLEOTIDE SEQUENCE [LARGE SCALE GENOMIC DNA]</scope>
    <source>
        <strain>ATCC 31267 / DSM 46492 / JCM 5070 / NBRC 14893 / NCIMB 12804 / NRRL 8165 / MA-4680</strain>
    </source>
</reference>
<evidence type="ECO:0000255" key="1">
    <source>
        <dbReference type="HAMAP-Rule" id="MF_00040"/>
    </source>
</evidence>
<proteinExistence type="inferred from homology"/>
<organism>
    <name type="scientific">Streptomyces avermitilis (strain ATCC 31267 / DSM 46492 / JCM 5070 / NBRC 14893 / NCIMB 12804 / NRRL 8165 / MA-4680)</name>
    <dbReference type="NCBI Taxonomy" id="227882"/>
    <lineage>
        <taxon>Bacteria</taxon>
        <taxon>Bacillati</taxon>
        <taxon>Actinomycetota</taxon>
        <taxon>Actinomycetes</taxon>
        <taxon>Kitasatosporales</taxon>
        <taxon>Streptomycetaceae</taxon>
        <taxon>Streptomyces</taxon>
    </lineage>
</organism>
<dbReference type="EMBL" id="BA000030">
    <property type="protein sequence ID" value="BAC70335.1"/>
    <property type="molecule type" value="Genomic_DNA"/>
</dbReference>
<dbReference type="RefSeq" id="WP_010984060.1">
    <property type="nucleotide sequence ID" value="NZ_JZJK01000071.1"/>
</dbReference>
<dbReference type="SMR" id="Q82JY0"/>
<dbReference type="GeneID" id="41539706"/>
<dbReference type="KEGG" id="sma:SAVERM_2624"/>
<dbReference type="eggNOG" id="COG0233">
    <property type="taxonomic scope" value="Bacteria"/>
</dbReference>
<dbReference type="HOGENOM" id="CLU_073981_2_0_11"/>
<dbReference type="OrthoDB" id="9804006at2"/>
<dbReference type="Proteomes" id="UP000000428">
    <property type="component" value="Chromosome"/>
</dbReference>
<dbReference type="GO" id="GO:0005737">
    <property type="term" value="C:cytoplasm"/>
    <property type="evidence" value="ECO:0007669"/>
    <property type="project" value="UniProtKB-SubCell"/>
</dbReference>
<dbReference type="GO" id="GO:0043023">
    <property type="term" value="F:ribosomal large subunit binding"/>
    <property type="evidence" value="ECO:0007669"/>
    <property type="project" value="TreeGrafter"/>
</dbReference>
<dbReference type="GO" id="GO:0006415">
    <property type="term" value="P:translational termination"/>
    <property type="evidence" value="ECO:0007669"/>
    <property type="project" value="UniProtKB-UniRule"/>
</dbReference>
<dbReference type="CDD" id="cd00520">
    <property type="entry name" value="RRF"/>
    <property type="match status" value="1"/>
</dbReference>
<dbReference type="FunFam" id="1.10.132.20:FF:000001">
    <property type="entry name" value="Ribosome-recycling factor"/>
    <property type="match status" value="1"/>
</dbReference>
<dbReference type="FunFam" id="3.30.1360.40:FF:000001">
    <property type="entry name" value="Ribosome-recycling factor"/>
    <property type="match status" value="1"/>
</dbReference>
<dbReference type="Gene3D" id="3.30.1360.40">
    <property type="match status" value="1"/>
</dbReference>
<dbReference type="Gene3D" id="1.10.132.20">
    <property type="entry name" value="Ribosome-recycling factor"/>
    <property type="match status" value="1"/>
</dbReference>
<dbReference type="HAMAP" id="MF_00040">
    <property type="entry name" value="RRF"/>
    <property type="match status" value="1"/>
</dbReference>
<dbReference type="InterPro" id="IPR002661">
    <property type="entry name" value="Ribosome_recyc_fac"/>
</dbReference>
<dbReference type="InterPro" id="IPR023584">
    <property type="entry name" value="Ribosome_recyc_fac_dom"/>
</dbReference>
<dbReference type="InterPro" id="IPR036191">
    <property type="entry name" value="RRF_sf"/>
</dbReference>
<dbReference type="NCBIfam" id="TIGR00496">
    <property type="entry name" value="frr"/>
    <property type="match status" value="1"/>
</dbReference>
<dbReference type="PANTHER" id="PTHR20982:SF3">
    <property type="entry name" value="MITOCHONDRIAL RIBOSOME RECYCLING FACTOR PSEUDO 1"/>
    <property type="match status" value="1"/>
</dbReference>
<dbReference type="PANTHER" id="PTHR20982">
    <property type="entry name" value="RIBOSOME RECYCLING FACTOR"/>
    <property type="match status" value="1"/>
</dbReference>
<dbReference type="Pfam" id="PF01765">
    <property type="entry name" value="RRF"/>
    <property type="match status" value="1"/>
</dbReference>
<dbReference type="SUPFAM" id="SSF55194">
    <property type="entry name" value="Ribosome recycling factor, RRF"/>
    <property type="match status" value="1"/>
</dbReference>
<accession>Q82JY0</accession>
<name>RRF_STRAW</name>
<comment type="function">
    <text evidence="1">Responsible for the release of ribosomes from messenger RNA at the termination of protein biosynthesis. May increase the efficiency of translation by recycling ribosomes from one round of translation to another.</text>
</comment>
<comment type="subcellular location">
    <subcellularLocation>
        <location evidence="1">Cytoplasm</location>
    </subcellularLocation>
</comment>
<comment type="similarity">
    <text evidence="1">Belongs to the RRF family.</text>
</comment>